<protein>
    <recommendedName>
        <fullName evidence="1">Acetylglutamate kinase</fullName>
        <ecNumber evidence="1">2.7.2.8</ecNumber>
    </recommendedName>
    <alternativeName>
        <fullName evidence="1">N-acetyl-L-glutamate 5-phosphotransferase</fullName>
    </alternativeName>
    <alternativeName>
        <fullName evidence="1">NAG kinase</fullName>
        <shortName evidence="1">NAGK</shortName>
    </alternativeName>
</protein>
<comment type="function">
    <text evidence="1">Catalyzes the ATP-dependent phosphorylation of N-acetyl-L-glutamate.</text>
</comment>
<comment type="catalytic activity">
    <reaction evidence="1">
        <text>N-acetyl-L-glutamate + ATP = N-acetyl-L-glutamyl 5-phosphate + ADP</text>
        <dbReference type="Rhea" id="RHEA:14629"/>
        <dbReference type="ChEBI" id="CHEBI:30616"/>
        <dbReference type="ChEBI" id="CHEBI:44337"/>
        <dbReference type="ChEBI" id="CHEBI:57936"/>
        <dbReference type="ChEBI" id="CHEBI:456216"/>
        <dbReference type="EC" id="2.7.2.8"/>
    </reaction>
</comment>
<comment type="pathway">
    <text evidence="1">Amino-acid biosynthesis; L-arginine biosynthesis; N(2)-acetyl-L-ornithine from L-glutamate: step 2/4.</text>
</comment>
<comment type="subunit">
    <text evidence="1">Homodimer.</text>
</comment>
<comment type="subcellular location">
    <subcellularLocation>
        <location evidence="1">Cytoplasm</location>
    </subcellularLocation>
</comment>
<comment type="similarity">
    <text evidence="1">Belongs to the acetylglutamate kinase family. ArgB subfamily.</text>
</comment>
<keyword id="KW-0028">Amino-acid biosynthesis</keyword>
<keyword id="KW-0055">Arginine biosynthesis</keyword>
<keyword id="KW-0067">ATP-binding</keyword>
<keyword id="KW-0963">Cytoplasm</keyword>
<keyword id="KW-0418">Kinase</keyword>
<keyword id="KW-0547">Nucleotide-binding</keyword>
<keyword id="KW-1185">Reference proteome</keyword>
<keyword id="KW-0808">Transferase</keyword>
<sequence length="257" mass="27028">MNPLIIKLGGVLLDSEEALERLFSALVNYRESHQRPLVIVHGGGCVVDELMKGLNLPVKKKNGLRVTPADQIDIITGALAGTANKTLLAWAKKHQIAAVGLFLGDGDSVKVTQLDEELGHVGLAQPGSPKLINSLLENGYLPVVSSIGVTDEGQLMNVNADQAATALAATLGADLILLSDVSGILDGKGQRIAEMTAAKAEQLIEQGIITDGMIVKVNAALDAARTLGRPVDIASWRHAEQLPALFNGMPMGTRILA</sequence>
<accession>A7ZUH7</accession>
<feature type="chain" id="PRO_0000335630" description="Acetylglutamate kinase">
    <location>
        <begin position="1"/>
        <end position="257"/>
    </location>
</feature>
<feature type="binding site" evidence="1">
    <location>
        <begin position="43"/>
        <end position="44"/>
    </location>
    <ligand>
        <name>substrate</name>
    </ligand>
</feature>
<feature type="binding site" evidence="1">
    <location>
        <position position="65"/>
    </location>
    <ligand>
        <name>substrate</name>
    </ligand>
</feature>
<feature type="binding site" evidence="1">
    <location>
        <position position="157"/>
    </location>
    <ligand>
        <name>substrate</name>
    </ligand>
</feature>
<feature type="binding site" evidence="1">
    <location>
        <begin position="180"/>
        <end position="185"/>
    </location>
    <ligand>
        <name>ATP</name>
        <dbReference type="ChEBI" id="CHEBI:30616"/>
    </ligand>
</feature>
<feature type="binding site" evidence="1">
    <location>
        <begin position="208"/>
        <end position="210"/>
    </location>
    <ligand>
        <name>ATP</name>
        <dbReference type="ChEBI" id="CHEBI:30616"/>
    </ligand>
</feature>
<feature type="site" description="Transition state stabilizer" evidence="1">
    <location>
        <position position="7"/>
    </location>
</feature>
<feature type="site" description="Transition state stabilizer" evidence="1">
    <location>
        <position position="216"/>
    </location>
</feature>
<name>ARGB_ECO24</name>
<dbReference type="EC" id="2.7.2.8" evidence="1"/>
<dbReference type="EMBL" id="CP000800">
    <property type="protein sequence ID" value="ABV16941.1"/>
    <property type="molecule type" value="Genomic_DNA"/>
</dbReference>
<dbReference type="SMR" id="A7ZUH7"/>
<dbReference type="KEGG" id="ecw:EcE24377A_4498"/>
<dbReference type="HOGENOM" id="CLU_053680_1_1_6"/>
<dbReference type="UniPathway" id="UPA00068">
    <property type="reaction ID" value="UER00107"/>
</dbReference>
<dbReference type="Proteomes" id="UP000001122">
    <property type="component" value="Chromosome"/>
</dbReference>
<dbReference type="GO" id="GO:0005737">
    <property type="term" value="C:cytoplasm"/>
    <property type="evidence" value="ECO:0007669"/>
    <property type="project" value="UniProtKB-SubCell"/>
</dbReference>
<dbReference type="GO" id="GO:0003991">
    <property type="term" value="F:acetylglutamate kinase activity"/>
    <property type="evidence" value="ECO:0007669"/>
    <property type="project" value="UniProtKB-UniRule"/>
</dbReference>
<dbReference type="GO" id="GO:0005524">
    <property type="term" value="F:ATP binding"/>
    <property type="evidence" value="ECO:0007669"/>
    <property type="project" value="UniProtKB-UniRule"/>
</dbReference>
<dbReference type="GO" id="GO:0042450">
    <property type="term" value="P:arginine biosynthetic process via ornithine"/>
    <property type="evidence" value="ECO:0007669"/>
    <property type="project" value="UniProtKB-UniRule"/>
</dbReference>
<dbReference type="GO" id="GO:0006526">
    <property type="term" value="P:L-arginine biosynthetic process"/>
    <property type="evidence" value="ECO:0007669"/>
    <property type="project" value="UniProtKB-UniPathway"/>
</dbReference>
<dbReference type="CDD" id="cd04249">
    <property type="entry name" value="AAK_NAGK-NC"/>
    <property type="match status" value="1"/>
</dbReference>
<dbReference type="FunFam" id="3.40.1160.10:FF:000008">
    <property type="entry name" value="Acetylglutamate kinase"/>
    <property type="match status" value="1"/>
</dbReference>
<dbReference type="Gene3D" id="3.40.1160.10">
    <property type="entry name" value="Acetylglutamate kinase-like"/>
    <property type="match status" value="1"/>
</dbReference>
<dbReference type="HAMAP" id="MF_00082">
    <property type="entry name" value="ArgB"/>
    <property type="match status" value="1"/>
</dbReference>
<dbReference type="InterPro" id="IPR036393">
    <property type="entry name" value="AceGlu_kinase-like_sf"/>
</dbReference>
<dbReference type="InterPro" id="IPR004662">
    <property type="entry name" value="AcgluKinase_fam"/>
</dbReference>
<dbReference type="InterPro" id="IPR037528">
    <property type="entry name" value="ArgB"/>
</dbReference>
<dbReference type="InterPro" id="IPR001048">
    <property type="entry name" value="Asp/Glu/Uridylate_kinase"/>
</dbReference>
<dbReference type="InterPro" id="IPR041731">
    <property type="entry name" value="NAGK-NC"/>
</dbReference>
<dbReference type="NCBIfam" id="TIGR00761">
    <property type="entry name" value="argB"/>
    <property type="match status" value="1"/>
</dbReference>
<dbReference type="PANTHER" id="PTHR23342">
    <property type="entry name" value="N-ACETYLGLUTAMATE SYNTHASE"/>
    <property type="match status" value="1"/>
</dbReference>
<dbReference type="PANTHER" id="PTHR23342:SF0">
    <property type="entry name" value="N-ACETYLGLUTAMATE SYNTHASE, MITOCHONDRIAL"/>
    <property type="match status" value="1"/>
</dbReference>
<dbReference type="Pfam" id="PF00696">
    <property type="entry name" value="AA_kinase"/>
    <property type="match status" value="1"/>
</dbReference>
<dbReference type="PIRSF" id="PIRSF000728">
    <property type="entry name" value="NAGK"/>
    <property type="match status" value="1"/>
</dbReference>
<dbReference type="SUPFAM" id="SSF53633">
    <property type="entry name" value="Carbamate kinase-like"/>
    <property type="match status" value="1"/>
</dbReference>
<organism>
    <name type="scientific">Escherichia coli O139:H28 (strain E24377A / ETEC)</name>
    <dbReference type="NCBI Taxonomy" id="331111"/>
    <lineage>
        <taxon>Bacteria</taxon>
        <taxon>Pseudomonadati</taxon>
        <taxon>Pseudomonadota</taxon>
        <taxon>Gammaproteobacteria</taxon>
        <taxon>Enterobacterales</taxon>
        <taxon>Enterobacteriaceae</taxon>
        <taxon>Escherichia</taxon>
    </lineage>
</organism>
<proteinExistence type="inferred from homology"/>
<evidence type="ECO:0000255" key="1">
    <source>
        <dbReference type="HAMAP-Rule" id="MF_00082"/>
    </source>
</evidence>
<gene>
    <name evidence="1" type="primary">argB</name>
    <name type="ordered locus">EcE24377A_4498</name>
</gene>
<reference key="1">
    <citation type="journal article" date="2008" name="J. Bacteriol.">
        <title>The pangenome structure of Escherichia coli: comparative genomic analysis of E. coli commensal and pathogenic isolates.</title>
        <authorList>
            <person name="Rasko D.A."/>
            <person name="Rosovitz M.J."/>
            <person name="Myers G.S.A."/>
            <person name="Mongodin E.F."/>
            <person name="Fricke W.F."/>
            <person name="Gajer P."/>
            <person name="Crabtree J."/>
            <person name="Sebaihia M."/>
            <person name="Thomson N.R."/>
            <person name="Chaudhuri R."/>
            <person name="Henderson I.R."/>
            <person name="Sperandio V."/>
            <person name="Ravel J."/>
        </authorList>
    </citation>
    <scope>NUCLEOTIDE SEQUENCE [LARGE SCALE GENOMIC DNA]</scope>
    <source>
        <strain>E24377A / ETEC</strain>
    </source>
</reference>